<evidence type="ECO:0000250" key="1"/>
<evidence type="ECO:0000250" key="2">
    <source>
        <dbReference type="UniProtKB" id="P50053"/>
    </source>
</evidence>
<evidence type="ECO:0000305" key="3"/>
<name>KHK_PONAB</name>
<reference key="1">
    <citation type="submission" date="2004-11" db="EMBL/GenBank/DDBJ databases">
        <authorList>
            <consortium name="The German cDNA consortium"/>
        </authorList>
    </citation>
    <scope>NUCLEOTIDE SEQUENCE [LARGE SCALE MRNA]</scope>
    <source>
        <tissue>Kidney</tissue>
    </source>
</reference>
<organism>
    <name type="scientific">Pongo abelii</name>
    <name type="common">Sumatran orangutan</name>
    <name type="synonym">Pongo pygmaeus abelii</name>
    <dbReference type="NCBI Taxonomy" id="9601"/>
    <lineage>
        <taxon>Eukaryota</taxon>
        <taxon>Metazoa</taxon>
        <taxon>Chordata</taxon>
        <taxon>Craniata</taxon>
        <taxon>Vertebrata</taxon>
        <taxon>Euteleostomi</taxon>
        <taxon>Mammalia</taxon>
        <taxon>Eutheria</taxon>
        <taxon>Euarchontoglires</taxon>
        <taxon>Primates</taxon>
        <taxon>Haplorrhini</taxon>
        <taxon>Catarrhini</taxon>
        <taxon>Hominidae</taxon>
        <taxon>Pongo</taxon>
    </lineage>
</organism>
<comment type="function">
    <text evidence="2">Catalyzes the phosphorylation of the ketose sugar fructose to fructose-1-phosphate.</text>
</comment>
<comment type="catalytic activity">
    <reaction>
        <text>beta-D-fructose + ATP = beta-D-fructose 1-phosphate + ADP + H(+)</text>
        <dbReference type="Rhea" id="RHEA:18145"/>
        <dbReference type="ChEBI" id="CHEBI:15378"/>
        <dbReference type="ChEBI" id="CHEBI:28645"/>
        <dbReference type="ChEBI" id="CHEBI:30616"/>
        <dbReference type="ChEBI" id="CHEBI:138881"/>
        <dbReference type="ChEBI" id="CHEBI:456216"/>
        <dbReference type="EC" id="2.7.1.3"/>
    </reaction>
</comment>
<comment type="activity regulation">
    <text evidence="1">Requires potassium. Inhibition by ADP (By similarity).</text>
</comment>
<comment type="pathway">
    <text>Carbohydrate metabolism; fructose metabolism.</text>
</comment>
<comment type="subunit">
    <text evidence="2">Homodimer.</text>
</comment>
<comment type="similarity">
    <text evidence="3">Belongs to the carbohydrate kinase PfkB family.</text>
</comment>
<protein>
    <recommendedName>
        <fullName>Ketohexokinase</fullName>
        <ecNumber>2.7.1.3</ecNumber>
    </recommendedName>
    <alternativeName>
        <fullName>Hepatic fructokinase</fullName>
    </alternativeName>
</protein>
<keyword id="KW-0067">ATP-binding</keyword>
<keyword id="KW-0119">Carbohydrate metabolism</keyword>
<keyword id="KW-0418">Kinase</keyword>
<keyword id="KW-0547">Nucleotide-binding</keyword>
<keyword id="KW-1185">Reference proteome</keyword>
<keyword id="KW-0808">Transferase</keyword>
<proteinExistence type="inferred from homology"/>
<sequence>MEEKQILCVGLVVLDVISLVDKYPKEDSEIRCLSQRWQRGGNASNSCTVLSLLGAPCAFMGSMAPGHVAFLVADFRRRGVDVSQVAWQSKGDTPSSCCIINNSNGNRTIVLHDTSLPDVSATDFEKVDLTQFKWIHIEGRNASEQVKMLQRIDTHNTRQPPEQKIRVSVEVEKPQEELFQLFGYGDVVFVSKDVAKHLGFQSAEAALRGLYGRVRKGAVLVCAWAEEGADALGPDDKLFHSDAFPPPRVVDTLGAGDTFNASVIFSLSQGRSMQEALRFGCQVAGKKCGLQGFDGIV</sequence>
<dbReference type="EC" id="2.7.1.3"/>
<dbReference type="EMBL" id="CR858045">
    <property type="protein sequence ID" value="CAH90286.1"/>
    <property type="molecule type" value="Transcribed_RNA"/>
</dbReference>
<dbReference type="SMR" id="Q5RD71"/>
<dbReference type="STRING" id="9601.ENSPPYP00000014032"/>
<dbReference type="eggNOG" id="KOG2947">
    <property type="taxonomic scope" value="Eukaryota"/>
</dbReference>
<dbReference type="InParanoid" id="Q5RD71"/>
<dbReference type="UniPathway" id="UPA00202"/>
<dbReference type="Proteomes" id="UP000001595">
    <property type="component" value="Unplaced"/>
</dbReference>
<dbReference type="GO" id="GO:0005524">
    <property type="term" value="F:ATP binding"/>
    <property type="evidence" value="ECO:0007669"/>
    <property type="project" value="UniProtKB-KW"/>
</dbReference>
<dbReference type="GO" id="GO:0004454">
    <property type="term" value="F:ketohexokinase activity"/>
    <property type="evidence" value="ECO:0007669"/>
    <property type="project" value="UniProtKB-EC"/>
</dbReference>
<dbReference type="GO" id="GO:0006000">
    <property type="term" value="P:fructose metabolic process"/>
    <property type="evidence" value="ECO:0007669"/>
    <property type="project" value="UniProtKB-UniPathway"/>
</dbReference>
<dbReference type="CDD" id="cd01939">
    <property type="entry name" value="Ketohexokinase"/>
    <property type="match status" value="1"/>
</dbReference>
<dbReference type="FunFam" id="3.40.1190.20:FF:000018">
    <property type="entry name" value="Ketohexokinase"/>
    <property type="match status" value="1"/>
</dbReference>
<dbReference type="Gene3D" id="3.40.1190.20">
    <property type="match status" value="1"/>
</dbReference>
<dbReference type="InterPro" id="IPR052562">
    <property type="entry name" value="Ketohexokinase-related"/>
</dbReference>
<dbReference type="InterPro" id="IPR034093">
    <property type="entry name" value="KHK"/>
</dbReference>
<dbReference type="InterPro" id="IPR011611">
    <property type="entry name" value="PfkB_dom"/>
</dbReference>
<dbReference type="InterPro" id="IPR029056">
    <property type="entry name" value="Ribokinase-like"/>
</dbReference>
<dbReference type="PANTHER" id="PTHR42774:SF3">
    <property type="entry name" value="KETOHEXOKINASE"/>
    <property type="match status" value="1"/>
</dbReference>
<dbReference type="PANTHER" id="PTHR42774">
    <property type="entry name" value="PHOSPHOTRANSFERASE SYSTEM TRANSPORT PROTEIN"/>
    <property type="match status" value="1"/>
</dbReference>
<dbReference type="Pfam" id="PF00294">
    <property type="entry name" value="PfkB"/>
    <property type="match status" value="1"/>
</dbReference>
<dbReference type="SUPFAM" id="SSF53613">
    <property type="entry name" value="Ribokinase-like"/>
    <property type="match status" value="1"/>
</dbReference>
<accession>Q5RD71</accession>
<feature type="chain" id="PRO_0000080090" description="Ketohexokinase">
    <location>
        <begin position="1"/>
        <end position="297"/>
    </location>
</feature>
<feature type="binding site" evidence="2">
    <location>
        <position position="15"/>
    </location>
    <ligand>
        <name>beta-D-fructose</name>
        <dbReference type="ChEBI" id="CHEBI:28645"/>
    </ligand>
</feature>
<feature type="binding site" evidence="2">
    <location>
        <position position="41"/>
    </location>
    <ligand>
        <name>beta-D-fructose</name>
        <dbReference type="ChEBI" id="CHEBI:28645"/>
    </ligand>
</feature>
<feature type="binding site" evidence="2">
    <location>
        <position position="42"/>
    </location>
    <ligand>
        <name>beta-D-fructose</name>
        <dbReference type="ChEBI" id="CHEBI:28645"/>
    </ligand>
</feature>
<feature type="binding site" evidence="2">
    <location>
        <position position="45"/>
    </location>
    <ligand>
        <name>beta-D-fructose</name>
        <dbReference type="ChEBI" id="CHEBI:28645"/>
    </ligand>
</feature>
<feature type="binding site" evidence="2">
    <location>
        <position position="107"/>
    </location>
    <ligand>
        <name>ATP</name>
        <dbReference type="ChEBI" id="CHEBI:30616"/>
    </ligand>
</feature>
<feature type="binding site" evidence="2">
    <location>
        <begin position="225"/>
        <end position="228"/>
    </location>
    <ligand>
        <name>ATP</name>
        <dbReference type="ChEBI" id="CHEBI:30616"/>
    </ligand>
</feature>
<feature type="binding site" evidence="2">
    <location>
        <begin position="254"/>
        <end position="257"/>
    </location>
    <ligand>
        <name>ATP</name>
        <dbReference type="ChEBI" id="CHEBI:30616"/>
    </ligand>
</feature>
<feature type="binding site" evidence="2">
    <location>
        <position position="257"/>
    </location>
    <ligand>
        <name>beta-D-fructose</name>
        <dbReference type="ChEBI" id="CHEBI:28645"/>
    </ligand>
</feature>
<gene>
    <name type="primary">KHK</name>
</gene>